<comment type="function">
    <text evidence="1">Transfers the gamma-phosphate of ATP to the 4'-position of a tetraacyldisaccharide 1-phosphate intermediate (termed DS-1-P) to form tetraacyldisaccharide 1,4'-bis-phosphate (lipid IVA).</text>
</comment>
<comment type="catalytic activity">
    <reaction evidence="1">
        <text>a lipid A disaccharide + ATP = a lipid IVA + ADP + H(+)</text>
        <dbReference type="Rhea" id="RHEA:67840"/>
        <dbReference type="ChEBI" id="CHEBI:15378"/>
        <dbReference type="ChEBI" id="CHEBI:30616"/>
        <dbReference type="ChEBI" id="CHEBI:176343"/>
        <dbReference type="ChEBI" id="CHEBI:176425"/>
        <dbReference type="ChEBI" id="CHEBI:456216"/>
        <dbReference type="EC" id="2.7.1.130"/>
    </reaction>
</comment>
<comment type="pathway">
    <text evidence="1">Glycolipid biosynthesis; lipid IV(A) biosynthesis; lipid IV(A) from (3R)-3-hydroxytetradecanoyl-[acyl-carrier-protein] and UDP-N-acetyl-alpha-D-glucosamine: step 6/6.</text>
</comment>
<comment type="similarity">
    <text evidence="1">Belongs to the LpxK family.</text>
</comment>
<gene>
    <name evidence="1" type="primary">lpxK</name>
    <name type="ordered locus">TC_0682</name>
</gene>
<reference key="1">
    <citation type="journal article" date="2000" name="Nucleic Acids Res.">
        <title>Genome sequences of Chlamydia trachomatis MoPn and Chlamydia pneumoniae AR39.</title>
        <authorList>
            <person name="Read T.D."/>
            <person name="Brunham R.C."/>
            <person name="Shen C."/>
            <person name="Gill S.R."/>
            <person name="Heidelberg J.F."/>
            <person name="White O."/>
            <person name="Hickey E.K."/>
            <person name="Peterson J.D."/>
            <person name="Utterback T.R."/>
            <person name="Berry K.J."/>
            <person name="Bass S."/>
            <person name="Linher K.D."/>
            <person name="Weidman J.F."/>
            <person name="Khouri H.M."/>
            <person name="Craven B."/>
            <person name="Bowman C."/>
            <person name="Dodson R.J."/>
            <person name="Gwinn M.L."/>
            <person name="Nelson W.C."/>
            <person name="DeBoy R.T."/>
            <person name="Kolonay J.F."/>
            <person name="McClarty G."/>
            <person name="Salzberg S.L."/>
            <person name="Eisen J.A."/>
            <person name="Fraser C.M."/>
        </authorList>
    </citation>
    <scope>NUCLEOTIDE SEQUENCE [LARGE SCALE GENOMIC DNA]</scope>
    <source>
        <strain>MoPn / Nigg</strain>
    </source>
</reference>
<feature type="chain" id="PRO_0000190919" description="Tetraacyldisaccharide 4'-kinase">
    <location>
        <begin position="1"/>
        <end position="369"/>
    </location>
</feature>
<feature type="binding site" evidence="1">
    <location>
        <begin position="68"/>
        <end position="75"/>
    </location>
    <ligand>
        <name>ATP</name>
        <dbReference type="ChEBI" id="CHEBI:30616"/>
    </ligand>
</feature>
<protein>
    <recommendedName>
        <fullName evidence="1">Tetraacyldisaccharide 4'-kinase</fullName>
        <ecNumber evidence="1">2.7.1.130</ecNumber>
    </recommendedName>
    <alternativeName>
        <fullName evidence="1">Lipid A 4'-kinase</fullName>
    </alternativeName>
</protein>
<keyword id="KW-0067">ATP-binding</keyword>
<keyword id="KW-0418">Kinase</keyword>
<keyword id="KW-0441">Lipid A biosynthesis</keyword>
<keyword id="KW-0444">Lipid biosynthesis</keyword>
<keyword id="KW-0443">Lipid metabolism</keyword>
<keyword id="KW-0547">Nucleotide-binding</keyword>
<keyword id="KW-0808">Transferase</keyword>
<evidence type="ECO:0000255" key="1">
    <source>
        <dbReference type="HAMAP-Rule" id="MF_00409"/>
    </source>
</evidence>
<sequence length="369" mass="40499">MRFSFLSGIRDLFRHFIISAASGALSDRLGWVWGAIAKVFSGSVWLRYKIAKPPHQVQATVVSVGNIVVGGTGKTPLVLWLAQALNERGISCAVLSRGYKGKCSQRKSFTIVDPALHTAACVGDEPLLLAKHLPAGTVRIQKDRKALAEKSAGAFDVLLLDDGFQCNRLHKDVEIVLVNGSDPFGGRAFFPKGRLRDFPERLAKANYVIVNGKCSPSDQRELDLLNPAAKILVEPQISEIVWLNKSANMPRDHWEGLGVGVFCGLGFPKGFLTMLRNAGIHVLGTHLLPDHSGITKQELELFCKKIILRQGVGILCTEKDSVKIEAFAEEMSLPIGEVRMRFSCVCNEERMVAMLDAIEAIQKNKKVTT</sequence>
<proteinExistence type="inferred from homology"/>
<dbReference type="EC" id="2.7.1.130" evidence="1"/>
<dbReference type="EMBL" id="AE002160">
    <property type="protein sequence ID" value="AAF39500.1"/>
    <property type="molecule type" value="Genomic_DNA"/>
</dbReference>
<dbReference type="PIR" id="E81675">
    <property type="entry name" value="E81675"/>
</dbReference>
<dbReference type="RefSeq" id="WP_010231211.1">
    <property type="nucleotide sequence ID" value="NZ_CP063055.1"/>
</dbReference>
<dbReference type="SMR" id="Q9PJZ4"/>
<dbReference type="GeneID" id="1246043"/>
<dbReference type="KEGG" id="cmu:TC_0682"/>
<dbReference type="eggNOG" id="COG1663">
    <property type="taxonomic scope" value="Bacteria"/>
</dbReference>
<dbReference type="HOGENOM" id="CLU_038816_6_0_0"/>
<dbReference type="OrthoDB" id="9789797at2"/>
<dbReference type="UniPathway" id="UPA00359">
    <property type="reaction ID" value="UER00482"/>
</dbReference>
<dbReference type="Proteomes" id="UP000000800">
    <property type="component" value="Chromosome"/>
</dbReference>
<dbReference type="GO" id="GO:0005886">
    <property type="term" value="C:plasma membrane"/>
    <property type="evidence" value="ECO:0007669"/>
    <property type="project" value="TreeGrafter"/>
</dbReference>
<dbReference type="GO" id="GO:0005524">
    <property type="term" value="F:ATP binding"/>
    <property type="evidence" value="ECO:0007669"/>
    <property type="project" value="UniProtKB-UniRule"/>
</dbReference>
<dbReference type="GO" id="GO:0009029">
    <property type="term" value="F:tetraacyldisaccharide 4'-kinase activity"/>
    <property type="evidence" value="ECO:0007669"/>
    <property type="project" value="UniProtKB-UniRule"/>
</dbReference>
<dbReference type="GO" id="GO:0009245">
    <property type="term" value="P:lipid A biosynthetic process"/>
    <property type="evidence" value="ECO:0007669"/>
    <property type="project" value="UniProtKB-UniRule"/>
</dbReference>
<dbReference type="GO" id="GO:0009244">
    <property type="term" value="P:lipopolysaccharide core region biosynthetic process"/>
    <property type="evidence" value="ECO:0007669"/>
    <property type="project" value="TreeGrafter"/>
</dbReference>
<dbReference type="HAMAP" id="MF_00409">
    <property type="entry name" value="LpxK"/>
    <property type="match status" value="1"/>
</dbReference>
<dbReference type="InterPro" id="IPR003758">
    <property type="entry name" value="LpxK"/>
</dbReference>
<dbReference type="InterPro" id="IPR027417">
    <property type="entry name" value="P-loop_NTPase"/>
</dbReference>
<dbReference type="NCBIfam" id="TIGR00682">
    <property type="entry name" value="lpxK"/>
    <property type="match status" value="1"/>
</dbReference>
<dbReference type="PANTHER" id="PTHR42724">
    <property type="entry name" value="TETRAACYLDISACCHARIDE 4'-KINASE"/>
    <property type="match status" value="1"/>
</dbReference>
<dbReference type="PANTHER" id="PTHR42724:SF1">
    <property type="entry name" value="TETRAACYLDISACCHARIDE 4'-KINASE, MITOCHONDRIAL-RELATED"/>
    <property type="match status" value="1"/>
</dbReference>
<dbReference type="Pfam" id="PF02606">
    <property type="entry name" value="LpxK"/>
    <property type="match status" value="1"/>
</dbReference>
<dbReference type="SUPFAM" id="SSF52540">
    <property type="entry name" value="P-loop containing nucleoside triphosphate hydrolases"/>
    <property type="match status" value="1"/>
</dbReference>
<accession>Q9PJZ4</accession>
<organism>
    <name type="scientific">Chlamydia muridarum (strain MoPn / Nigg)</name>
    <dbReference type="NCBI Taxonomy" id="243161"/>
    <lineage>
        <taxon>Bacteria</taxon>
        <taxon>Pseudomonadati</taxon>
        <taxon>Chlamydiota</taxon>
        <taxon>Chlamydiia</taxon>
        <taxon>Chlamydiales</taxon>
        <taxon>Chlamydiaceae</taxon>
        <taxon>Chlamydia/Chlamydophila group</taxon>
        <taxon>Chlamydia</taxon>
    </lineage>
</organism>
<name>LPXK_CHLMU</name>